<name>UBE2S_NEMVE</name>
<feature type="chain" id="PRO_0000390436" description="Ubiquitin-conjugating enzyme E2 S">
    <location>
        <begin position="1"/>
        <end position="204"/>
    </location>
</feature>
<feature type="domain" description="UBC core" evidence="1">
    <location>
        <begin position="14"/>
        <end position="160"/>
    </location>
</feature>
<feature type="region of interest" description="Disordered" evidence="3">
    <location>
        <begin position="165"/>
        <end position="204"/>
    </location>
</feature>
<feature type="compositionally biased region" description="Polar residues" evidence="3">
    <location>
        <begin position="165"/>
        <end position="176"/>
    </location>
</feature>
<feature type="compositionally biased region" description="Basic residues" evidence="3">
    <location>
        <begin position="191"/>
        <end position="204"/>
    </location>
</feature>
<feature type="active site" description="Glycyl thioester intermediate" evidence="1 2">
    <location>
        <position position="98"/>
    </location>
</feature>
<organism>
    <name type="scientific">Nematostella vectensis</name>
    <name type="common">Starlet sea anemone</name>
    <dbReference type="NCBI Taxonomy" id="45351"/>
    <lineage>
        <taxon>Eukaryota</taxon>
        <taxon>Metazoa</taxon>
        <taxon>Cnidaria</taxon>
        <taxon>Anthozoa</taxon>
        <taxon>Hexacorallia</taxon>
        <taxon>Actiniaria</taxon>
        <taxon>Edwardsiidae</taxon>
        <taxon>Nematostella</taxon>
    </lineage>
</organism>
<keyword id="KW-0067">ATP-binding</keyword>
<keyword id="KW-0131">Cell cycle</keyword>
<keyword id="KW-0132">Cell division</keyword>
<keyword id="KW-0547">Nucleotide-binding</keyword>
<keyword id="KW-1185">Reference proteome</keyword>
<keyword id="KW-0808">Transferase</keyword>
<keyword id="KW-0833">Ubl conjugation pathway</keyword>
<reference key="1">
    <citation type="journal article" date="2007" name="Science">
        <title>Sea anemone genome reveals ancestral eumetazoan gene repertoire and genomic organization.</title>
        <authorList>
            <person name="Putnam N.H."/>
            <person name="Srivastava M."/>
            <person name="Hellsten U."/>
            <person name="Dirks B."/>
            <person name="Chapman J."/>
            <person name="Salamov A."/>
            <person name="Terry A."/>
            <person name="Shapiro H."/>
            <person name="Lindquist E."/>
            <person name="Kapitonov V.V."/>
            <person name="Jurka J."/>
            <person name="Genikhovich G."/>
            <person name="Grigoriev I.V."/>
            <person name="Lucas S.M."/>
            <person name="Steele R.E."/>
            <person name="Finnerty J.R."/>
            <person name="Technau U."/>
            <person name="Martindale M.Q."/>
            <person name="Rokhsar D.S."/>
        </authorList>
    </citation>
    <scope>NUCLEOTIDE SEQUENCE [LARGE SCALE GENOMIC DNA]</scope>
    <source>
        <strain>CH2 X CH6</strain>
    </source>
</reference>
<comment type="function">
    <text evidence="1">Catalyzes the covalent attachment of ubiquitin to other proteins. Acts as an essential factor of the anaphase promoting complex/cyclosome (APC/C), a cell cycle-regulated ubiquitin ligase that controls progression through mitosis. Acts by specifically elongating polyubiquitin chains initiated by the E2 enzyme UBCH10 on APC/C substrates, enhancing the degradation of APC/C substrates by the proteasome and promoting mitotic exit.</text>
</comment>
<comment type="catalytic activity">
    <reaction evidence="1 2">
        <text>S-ubiquitinyl-[E1 ubiquitin-activating enzyme]-L-cysteine + [E2 ubiquitin-conjugating enzyme]-L-cysteine = [E1 ubiquitin-activating enzyme]-L-cysteine + S-ubiquitinyl-[E2 ubiquitin-conjugating enzyme]-L-cysteine.</text>
        <dbReference type="EC" id="2.3.2.23"/>
    </reaction>
</comment>
<comment type="pathway">
    <text evidence="1">Protein modification; protein ubiquitination.</text>
</comment>
<comment type="similarity">
    <text evidence="1">Belongs to the ubiquitin-conjugating enzyme family.</text>
</comment>
<accession>A7SE05</accession>
<evidence type="ECO:0000255" key="1">
    <source>
        <dbReference type="PROSITE-ProRule" id="PRU00388"/>
    </source>
</evidence>
<evidence type="ECO:0000255" key="2">
    <source>
        <dbReference type="PROSITE-ProRule" id="PRU10133"/>
    </source>
</evidence>
<evidence type="ECO:0000256" key="3">
    <source>
        <dbReference type="SAM" id="MobiDB-lite"/>
    </source>
</evidence>
<gene>
    <name type="ORF">v1g237158</name>
</gene>
<protein>
    <recommendedName>
        <fullName>Ubiquitin-conjugating enzyme E2 S</fullName>
        <ecNumber>2.3.2.23</ecNumber>
    </recommendedName>
    <alternativeName>
        <fullName>E2 ubiquitin-conjugating enzyme S</fullName>
    </alternativeName>
    <alternativeName>
        <fullName>Ubiquitin carrier protein S</fullName>
    </alternativeName>
    <alternativeName>
        <fullName>Ubiquitin-protein ligase S</fullName>
    </alternativeName>
</protein>
<proteinExistence type="inferred from homology"/>
<sequence>MATTSSNVENFSPQIIKQVAREIHGLTNDPPEGIKVFSNDEDITDIQASIEGPTGTPYEGGIFKIKLVLGKDFPAAPPKGFFLTKIFHPNVAKNGEICVNTLKKDWKPDLGIKQVLLTVKCLLIVPNPESALNEEAGKLLLERYDDYSKRAKMFTEIHAKLSASSSNNISEGQQESLPGKKRVAVNEKMCDKKKKDKKRALKRL</sequence>
<dbReference type="EC" id="2.3.2.23"/>
<dbReference type="EMBL" id="DS469633">
    <property type="protein sequence ID" value="EDO38105.1"/>
    <property type="molecule type" value="Genomic_DNA"/>
</dbReference>
<dbReference type="SMR" id="A7SE05"/>
<dbReference type="STRING" id="45351.A7SE05"/>
<dbReference type="EnsemblMetazoa" id="EDO38105">
    <property type="protein sequence ID" value="EDO38105"/>
    <property type="gene ID" value="NEMVEDRAFT_v1g237158"/>
</dbReference>
<dbReference type="KEGG" id="nve:5509668"/>
<dbReference type="eggNOG" id="KOG0423">
    <property type="taxonomic scope" value="Eukaryota"/>
</dbReference>
<dbReference type="HOGENOM" id="CLU_030988_5_3_1"/>
<dbReference type="InParanoid" id="A7SE05"/>
<dbReference type="OMA" id="QPAKCGA"/>
<dbReference type="OrthoDB" id="10069349at2759"/>
<dbReference type="PhylomeDB" id="A7SE05"/>
<dbReference type="UniPathway" id="UPA00143"/>
<dbReference type="Proteomes" id="UP000001593">
    <property type="component" value="Unassembled WGS sequence"/>
</dbReference>
<dbReference type="GO" id="GO:0005680">
    <property type="term" value="C:anaphase-promoting complex"/>
    <property type="evidence" value="ECO:0000250"/>
    <property type="project" value="UniProtKB"/>
</dbReference>
<dbReference type="GO" id="GO:0005634">
    <property type="term" value="C:nucleus"/>
    <property type="evidence" value="ECO:0000318"/>
    <property type="project" value="GO_Central"/>
</dbReference>
<dbReference type="GO" id="GO:0005524">
    <property type="term" value="F:ATP binding"/>
    <property type="evidence" value="ECO:0007669"/>
    <property type="project" value="UniProtKB-KW"/>
</dbReference>
<dbReference type="GO" id="GO:0061631">
    <property type="term" value="F:ubiquitin conjugating enzyme activity"/>
    <property type="evidence" value="ECO:0000318"/>
    <property type="project" value="GO_Central"/>
</dbReference>
<dbReference type="GO" id="GO:0031145">
    <property type="term" value="P:anaphase-promoting complex-dependent catabolic process"/>
    <property type="evidence" value="ECO:0000250"/>
    <property type="project" value="UniProtKB"/>
</dbReference>
<dbReference type="GO" id="GO:0051301">
    <property type="term" value="P:cell division"/>
    <property type="evidence" value="ECO:0007669"/>
    <property type="project" value="UniProtKB-KW"/>
</dbReference>
<dbReference type="GO" id="GO:0010458">
    <property type="term" value="P:exit from mitosis"/>
    <property type="evidence" value="ECO:0000250"/>
    <property type="project" value="UniProtKB"/>
</dbReference>
<dbReference type="GO" id="GO:0010994">
    <property type="term" value="P:free ubiquitin chain polymerization"/>
    <property type="evidence" value="ECO:0000250"/>
    <property type="project" value="UniProtKB"/>
</dbReference>
<dbReference type="GO" id="GO:1904668">
    <property type="term" value="P:positive regulation of ubiquitin protein ligase activity"/>
    <property type="evidence" value="ECO:0000250"/>
    <property type="project" value="UniProtKB"/>
</dbReference>
<dbReference type="GO" id="GO:0070979">
    <property type="term" value="P:protein K11-linked ubiquitination"/>
    <property type="evidence" value="ECO:0000250"/>
    <property type="project" value="UniProtKB"/>
</dbReference>
<dbReference type="GO" id="GO:0000209">
    <property type="term" value="P:protein polyubiquitination"/>
    <property type="evidence" value="ECO:0000318"/>
    <property type="project" value="GO_Central"/>
</dbReference>
<dbReference type="GO" id="GO:0006511">
    <property type="term" value="P:ubiquitin-dependent protein catabolic process"/>
    <property type="evidence" value="ECO:0000318"/>
    <property type="project" value="GO_Central"/>
</dbReference>
<dbReference type="CDD" id="cd23804">
    <property type="entry name" value="UBCc_UBE2S"/>
    <property type="match status" value="1"/>
</dbReference>
<dbReference type="FunFam" id="3.10.110.10:FF:000034">
    <property type="entry name" value="Ubiquitin-conjugating enzyme E2 S"/>
    <property type="match status" value="1"/>
</dbReference>
<dbReference type="Gene3D" id="3.10.110.10">
    <property type="entry name" value="Ubiquitin Conjugating Enzyme"/>
    <property type="match status" value="1"/>
</dbReference>
<dbReference type="InterPro" id="IPR050113">
    <property type="entry name" value="Ub_conjugating_enzyme"/>
</dbReference>
<dbReference type="InterPro" id="IPR000608">
    <property type="entry name" value="UBQ-conjugat_E2_core"/>
</dbReference>
<dbReference type="InterPro" id="IPR023313">
    <property type="entry name" value="UBQ-conjugating_AS"/>
</dbReference>
<dbReference type="InterPro" id="IPR016135">
    <property type="entry name" value="UBQ-conjugating_enzyme/RWD"/>
</dbReference>
<dbReference type="PANTHER" id="PTHR24067">
    <property type="entry name" value="UBIQUITIN-CONJUGATING ENZYME E2"/>
    <property type="match status" value="1"/>
</dbReference>
<dbReference type="Pfam" id="PF00179">
    <property type="entry name" value="UQ_con"/>
    <property type="match status" value="1"/>
</dbReference>
<dbReference type="SMART" id="SM00212">
    <property type="entry name" value="UBCc"/>
    <property type="match status" value="1"/>
</dbReference>
<dbReference type="SUPFAM" id="SSF54495">
    <property type="entry name" value="UBC-like"/>
    <property type="match status" value="1"/>
</dbReference>
<dbReference type="PROSITE" id="PS00183">
    <property type="entry name" value="UBC_1"/>
    <property type="match status" value="1"/>
</dbReference>
<dbReference type="PROSITE" id="PS50127">
    <property type="entry name" value="UBC_2"/>
    <property type="match status" value="1"/>
</dbReference>